<accession>Q9LVS0</accession>
<feature type="chain" id="PRO_0000439178" description="Transcription factor KUA1">
    <location>
        <begin position="1"/>
        <end position="365"/>
    </location>
</feature>
<feature type="domain" description="HTH myb-type" evidence="2">
    <location>
        <begin position="90"/>
        <end position="146"/>
    </location>
</feature>
<feature type="zinc finger region" description="CCHC-type" evidence="1">
    <location>
        <begin position="3"/>
        <end position="20"/>
    </location>
</feature>
<feature type="DNA-binding region" description="H-T-H motif" evidence="2">
    <location>
        <begin position="118"/>
        <end position="142"/>
    </location>
</feature>
<feature type="region of interest" description="Disordered" evidence="3">
    <location>
        <begin position="1"/>
        <end position="21"/>
    </location>
</feature>
<feature type="region of interest" description="Disordered" evidence="3">
    <location>
        <begin position="41"/>
        <end position="99"/>
    </location>
</feature>
<feature type="region of interest" description="Disordered" evidence="3">
    <location>
        <begin position="214"/>
        <end position="254"/>
    </location>
</feature>
<feature type="region of interest" description="Disordered" evidence="3">
    <location>
        <begin position="321"/>
        <end position="365"/>
    </location>
</feature>
<feature type="short sequence motif" description="R/KLFGV (transcriptional repression)" evidence="8">
    <location>
        <begin position="24"/>
        <end position="28"/>
    </location>
</feature>
<feature type="compositionally biased region" description="Polar residues" evidence="3">
    <location>
        <begin position="8"/>
        <end position="18"/>
    </location>
</feature>
<feature type="compositionally biased region" description="Low complexity" evidence="3">
    <location>
        <begin position="220"/>
        <end position="254"/>
    </location>
</feature>
<feature type="compositionally biased region" description="Polar residues" evidence="3">
    <location>
        <begin position="343"/>
        <end position="355"/>
    </location>
</feature>
<proteinExistence type="evidence at protein level"/>
<comment type="function">
    <text evidence="5 6 7">Transcriptional repressor (PubMed:23888064, PubMed:24806884). Direct regulator of the transcription of peroxidase (Prxs) and reactive oxygen species (ROS)-related genes via the recognition of 5'-ATCACA-3' motif (PubMed:24806884). Binds to 5'-TATCCA-3' motif (TA box) and represses the activity of corresponding promoters (e.g. sugar response genes) (PubMed:25920996). Regulates hypocotyl elongation in response to darkness by enhancing auxin accumulation in a phytochrome-interacting factor (PIF) proteins-dependent manner. Promotes lateral roots formation (PubMed:23888064). Promotes cell expansion during leaves development via the modulation of cell wall-located Prxs (PubMed:24806884). Plays a critical role in developmentally regulated and dark-induced onset of leaf senescence by repressing the transcription of several genes involved in chloroplast function and responses to light and auxin. Promotes responses to auxin, abscisic acid (ABA), and ethylene (PubMed:25920996).</text>
</comment>
<comment type="interaction">
    <interactant intactId="EBI-15200088">
        <id>Q9LVS0</id>
    </interactant>
    <interactant intactId="EBI-9838721">
        <id>O64647</id>
        <label>TCP9</label>
    </interactant>
    <organismsDiffer>false</organismsDiffer>
    <experiments>3</experiments>
</comment>
<comment type="interaction">
    <interactant intactId="EBI-15200088">
        <id>Q9LVS0</id>
    </interactant>
    <interactant intactId="EBI-395803">
        <id>Q9XGN1</id>
        <label>TTG1</label>
    </interactant>
    <organismsDiffer>false</organismsDiffer>
    <experiments>3</experiments>
</comment>
<comment type="subcellular location">
    <subcellularLocation>
        <location evidence="2 5 6">Nucleus</location>
    </subcellularLocation>
</comment>
<comment type="tissue specificity">
    <text evidence="7">Expressed ubiquitously, except in hypocotyls, root tips and lateral root primordia.</text>
</comment>
<comment type="developmental stage">
    <text evidence="6 7">Accumulates during leaf expansion. First observed at the tip of the leaves 12 days after sowing (DAS). At 14 DAS, expressed throughout the leaf blade to fade out thereafter in a basipetal manner. In mature leaves, detected in vascular tissue, especially in companion cells (PubMed:24806884). Accumulates to higher levels in old rosette leaves than in young rosette and cauline leaves (PubMed:25920996).</text>
</comment>
<comment type="induction">
    <text evidence="4 5 6 7">Slightly induced by CdCl(2) (PubMed:16463103). Accumulates in the dark (PubMed:23888064, PubMed:25920996). Diurnal expression pattern with maximal levels in the morning (at protein level). Specifically induced during leaf expansion (PubMed:24806884). Expressed in old and dark-treated leaves (PubMed:25920996).</text>
</comment>
<comment type="domain">
    <text evidence="8">Contains a R/KLFGV repression motif, which may be involved in the activity of transcriptional repression.</text>
</comment>
<comment type="disruption phenotype">
    <text evidence="5 6 7">Defects in root growth. No visible hypocotyl phenotypes. Increased sensitivity to the gibberellic acid (GA) biosynthesis inhibitor paclobutrazol (PAC) and auxin (IAA) that inhibit hypocotyl elongation (PubMed:23888064). Reduced leaf size due to impaired cell expansion associated with an enhanced expression of peroxidase (Prxs) genes. This phenotype is reversed by SHAM treatment, a peroxidase inhibitor. Increased accumulation of H(2)O(2) (PubMed:24806884). Delayed senescence. Enhanced auxin-responsive gene expression (PubMed:25920996).</text>
</comment>
<comment type="miscellaneous">
    <text evidence="12">'Kuoda' means 'enlarge' or 'expand' in Chinese.</text>
</comment>
<dbReference type="EMBL" id="AY519516">
    <property type="protein sequence ID" value="AAS09986.1"/>
    <property type="molecule type" value="mRNA"/>
</dbReference>
<dbReference type="EMBL" id="AB018117">
    <property type="protein sequence ID" value="BAA97173.1"/>
    <property type="molecule type" value="Genomic_DNA"/>
</dbReference>
<dbReference type="EMBL" id="CP002688">
    <property type="protein sequence ID" value="AED95505.1"/>
    <property type="molecule type" value="Genomic_DNA"/>
</dbReference>
<dbReference type="EMBL" id="AY072077">
    <property type="protein sequence ID" value="AAL59900.1"/>
    <property type="molecule type" value="mRNA"/>
</dbReference>
<dbReference type="EMBL" id="AY096661">
    <property type="protein sequence ID" value="AAM20295.1"/>
    <property type="molecule type" value="mRNA"/>
</dbReference>
<dbReference type="EMBL" id="AK226931">
    <property type="protein sequence ID" value="BAE99002.1"/>
    <property type="molecule type" value="mRNA"/>
</dbReference>
<dbReference type="EMBL" id="AY084295">
    <property type="protein sequence ID" value="AAM60886.1"/>
    <property type="molecule type" value="mRNA"/>
</dbReference>
<dbReference type="RefSeq" id="NP_199550.1">
    <property type="nucleotide sequence ID" value="NM_124110.4"/>
</dbReference>
<dbReference type="FunCoup" id="Q9LVS0">
    <property type="interactions" value="879"/>
</dbReference>
<dbReference type="IntAct" id="Q9LVS0">
    <property type="interactions" value="8"/>
</dbReference>
<dbReference type="STRING" id="3702.Q9LVS0"/>
<dbReference type="PaxDb" id="3702-AT5G47390.1"/>
<dbReference type="ProteomicsDB" id="237037"/>
<dbReference type="EnsemblPlants" id="AT5G47390.1">
    <property type="protein sequence ID" value="AT5G47390.1"/>
    <property type="gene ID" value="AT5G47390"/>
</dbReference>
<dbReference type="GeneID" id="834786"/>
<dbReference type="Gramene" id="AT5G47390.1">
    <property type="protein sequence ID" value="AT5G47390.1"/>
    <property type="gene ID" value="AT5G47390"/>
</dbReference>
<dbReference type="KEGG" id="ath:AT5G47390"/>
<dbReference type="Araport" id="AT5G47390"/>
<dbReference type="TAIR" id="AT5G47390">
    <property type="gene designation" value="MYBH"/>
</dbReference>
<dbReference type="eggNOG" id="ENOG502QUPG">
    <property type="taxonomic scope" value="Eukaryota"/>
</dbReference>
<dbReference type="HOGENOM" id="CLU_038424_0_0_1"/>
<dbReference type="InParanoid" id="Q9LVS0"/>
<dbReference type="OMA" id="FPFPIWP"/>
<dbReference type="OrthoDB" id="118550at2759"/>
<dbReference type="PhylomeDB" id="Q9LVS0"/>
<dbReference type="PRO" id="PR:Q9LVS0"/>
<dbReference type="Proteomes" id="UP000006548">
    <property type="component" value="Chromosome 5"/>
</dbReference>
<dbReference type="ExpressionAtlas" id="Q9LVS0">
    <property type="expression patterns" value="baseline and differential"/>
</dbReference>
<dbReference type="GO" id="GO:0005634">
    <property type="term" value="C:nucleus"/>
    <property type="evidence" value="ECO:0000314"/>
    <property type="project" value="UniProtKB"/>
</dbReference>
<dbReference type="GO" id="GO:0003700">
    <property type="term" value="F:DNA-binding transcription factor activity"/>
    <property type="evidence" value="ECO:0000314"/>
    <property type="project" value="UniProtKB"/>
</dbReference>
<dbReference type="GO" id="GO:0000976">
    <property type="term" value="F:transcription cis-regulatory region binding"/>
    <property type="evidence" value="ECO:0000314"/>
    <property type="project" value="UniProtKB"/>
</dbReference>
<dbReference type="GO" id="GO:0008270">
    <property type="term" value="F:zinc ion binding"/>
    <property type="evidence" value="ECO:0007669"/>
    <property type="project" value="UniProtKB-KW"/>
</dbReference>
<dbReference type="GO" id="GO:0140964">
    <property type="term" value="P:intracellular auxin homeostasis"/>
    <property type="evidence" value="ECO:0000315"/>
    <property type="project" value="UniProtKB"/>
</dbReference>
<dbReference type="GO" id="GO:0048527">
    <property type="term" value="P:lateral root development"/>
    <property type="evidence" value="ECO:0000315"/>
    <property type="project" value="UniProtKB"/>
</dbReference>
<dbReference type="GO" id="GO:0048366">
    <property type="term" value="P:leaf development"/>
    <property type="evidence" value="ECO:0000315"/>
    <property type="project" value="TAIR"/>
</dbReference>
<dbReference type="GO" id="GO:0010150">
    <property type="term" value="P:leaf senescence"/>
    <property type="evidence" value="ECO:0000315"/>
    <property type="project" value="UniProtKB"/>
</dbReference>
<dbReference type="GO" id="GO:0045892">
    <property type="term" value="P:negative regulation of DNA-templated transcription"/>
    <property type="evidence" value="ECO:0000314"/>
    <property type="project" value="UniProtKB"/>
</dbReference>
<dbReference type="GO" id="GO:0000122">
    <property type="term" value="P:negative regulation of transcription by RNA polymerase II"/>
    <property type="evidence" value="ECO:0000315"/>
    <property type="project" value="TAIR"/>
</dbReference>
<dbReference type="GO" id="GO:0030307">
    <property type="term" value="P:positive regulation of cell growth"/>
    <property type="evidence" value="ECO:0000315"/>
    <property type="project" value="TAIR"/>
</dbReference>
<dbReference type="GO" id="GO:0090697">
    <property type="term" value="P:post-embryonic plant organ morphogenesis"/>
    <property type="evidence" value="ECO:0000315"/>
    <property type="project" value="UniProtKB"/>
</dbReference>
<dbReference type="GO" id="GO:0006355">
    <property type="term" value="P:regulation of DNA-templated transcription"/>
    <property type="evidence" value="ECO:0000304"/>
    <property type="project" value="TAIR"/>
</dbReference>
<dbReference type="GO" id="GO:0009737">
    <property type="term" value="P:response to abscisic acid"/>
    <property type="evidence" value="ECO:0000315"/>
    <property type="project" value="UniProtKB"/>
</dbReference>
<dbReference type="GO" id="GO:0009646">
    <property type="term" value="P:response to absence of light"/>
    <property type="evidence" value="ECO:0000270"/>
    <property type="project" value="UniProtKB"/>
</dbReference>
<dbReference type="GO" id="GO:0009723">
    <property type="term" value="P:response to ethylene"/>
    <property type="evidence" value="ECO:0000315"/>
    <property type="project" value="UniProtKB"/>
</dbReference>
<dbReference type="CDD" id="cd00167">
    <property type="entry name" value="SANT"/>
    <property type="match status" value="1"/>
</dbReference>
<dbReference type="FunFam" id="1.10.10.60:FF:000009">
    <property type="entry name" value="transcription factor MYB1R1"/>
    <property type="match status" value="1"/>
</dbReference>
<dbReference type="Gene3D" id="1.10.10.60">
    <property type="entry name" value="Homeodomain-like"/>
    <property type="match status" value="1"/>
</dbReference>
<dbReference type="InterPro" id="IPR009057">
    <property type="entry name" value="Homeodomain-like_sf"/>
</dbReference>
<dbReference type="InterPro" id="IPR017930">
    <property type="entry name" value="Myb_dom"/>
</dbReference>
<dbReference type="InterPro" id="IPR006447">
    <property type="entry name" value="Myb_dom_plants"/>
</dbReference>
<dbReference type="InterPro" id="IPR052245">
    <property type="entry name" value="Plant_Stress_Dev_TF"/>
</dbReference>
<dbReference type="InterPro" id="IPR001005">
    <property type="entry name" value="SANT/Myb"/>
</dbReference>
<dbReference type="InterPro" id="IPR017884">
    <property type="entry name" value="SANT_dom"/>
</dbReference>
<dbReference type="InterPro" id="IPR001878">
    <property type="entry name" value="Znf_CCHC"/>
</dbReference>
<dbReference type="NCBIfam" id="TIGR01557">
    <property type="entry name" value="myb_SHAQKYF"/>
    <property type="match status" value="1"/>
</dbReference>
<dbReference type="PANTHER" id="PTHR44191">
    <property type="entry name" value="TRANSCRIPTION FACTOR KUA1"/>
    <property type="match status" value="1"/>
</dbReference>
<dbReference type="PANTHER" id="PTHR44191:SF26">
    <property type="entry name" value="TRANSCRIPTION FACTOR KUA1"/>
    <property type="match status" value="1"/>
</dbReference>
<dbReference type="Pfam" id="PF00249">
    <property type="entry name" value="Myb_DNA-binding"/>
    <property type="match status" value="1"/>
</dbReference>
<dbReference type="SMART" id="SM00717">
    <property type="entry name" value="SANT"/>
    <property type="match status" value="1"/>
</dbReference>
<dbReference type="SUPFAM" id="SSF46689">
    <property type="entry name" value="Homeodomain-like"/>
    <property type="match status" value="1"/>
</dbReference>
<dbReference type="PROSITE" id="PS51294">
    <property type="entry name" value="HTH_MYB"/>
    <property type="match status" value="1"/>
</dbReference>
<dbReference type="PROSITE" id="PS50158">
    <property type="entry name" value="ZF_CCHC"/>
    <property type="match status" value="1"/>
</dbReference>
<reference key="1">
    <citation type="submission" date="2004-02" db="EMBL/GenBank/DDBJ databases">
        <title>The MYB transcription factor family in Arabidopsis: A genome-wide cloning and expression pattern analysis.</title>
        <authorList>
            <person name="Qu L."/>
            <person name="Gu H."/>
        </authorList>
    </citation>
    <scope>NUCLEOTIDE SEQUENCE [MRNA]</scope>
</reference>
<reference key="2">
    <citation type="journal article" date="2000" name="DNA Res.">
        <title>Structural analysis of Arabidopsis thaliana chromosome 5. X. Sequence features of the regions of 3,076,755 bp covered by sixty P1 and TAC clones.</title>
        <authorList>
            <person name="Sato S."/>
            <person name="Nakamura Y."/>
            <person name="Kaneko T."/>
            <person name="Katoh T."/>
            <person name="Asamizu E."/>
            <person name="Kotani H."/>
            <person name="Tabata S."/>
        </authorList>
    </citation>
    <scope>NUCLEOTIDE SEQUENCE [LARGE SCALE GENOMIC DNA]</scope>
    <source>
        <strain>cv. Columbia</strain>
    </source>
</reference>
<reference key="3">
    <citation type="journal article" date="2017" name="Plant J.">
        <title>Araport11: a complete reannotation of the Arabidopsis thaliana reference genome.</title>
        <authorList>
            <person name="Cheng C.Y."/>
            <person name="Krishnakumar V."/>
            <person name="Chan A.P."/>
            <person name="Thibaud-Nissen F."/>
            <person name="Schobel S."/>
            <person name="Town C.D."/>
        </authorList>
    </citation>
    <scope>GENOME REANNOTATION</scope>
    <source>
        <strain>cv. Columbia</strain>
    </source>
</reference>
<reference key="4">
    <citation type="journal article" date="2003" name="Science">
        <title>Empirical analysis of transcriptional activity in the Arabidopsis genome.</title>
        <authorList>
            <person name="Yamada K."/>
            <person name="Lim J."/>
            <person name="Dale J.M."/>
            <person name="Chen H."/>
            <person name="Shinn P."/>
            <person name="Palm C.J."/>
            <person name="Southwick A.M."/>
            <person name="Wu H.C."/>
            <person name="Kim C.J."/>
            <person name="Nguyen M."/>
            <person name="Pham P.K."/>
            <person name="Cheuk R.F."/>
            <person name="Karlin-Newmann G."/>
            <person name="Liu S.X."/>
            <person name="Lam B."/>
            <person name="Sakano H."/>
            <person name="Wu T."/>
            <person name="Yu G."/>
            <person name="Miranda M."/>
            <person name="Quach H.L."/>
            <person name="Tripp M."/>
            <person name="Chang C.H."/>
            <person name="Lee J.M."/>
            <person name="Toriumi M.J."/>
            <person name="Chan M.M."/>
            <person name="Tang C.C."/>
            <person name="Onodera C.S."/>
            <person name="Deng J.M."/>
            <person name="Akiyama K."/>
            <person name="Ansari Y."/>
            <person name="Arakawa T."/>
            <person name="Banh J."/>
            <person name="Banno F."/>
            <person name="Bowser L."/>
            <person name="Brooks S.Y."/>
            <person name="Carninci P."/>
            <person name="Chao Q."/>
            <person name="Choy N."/>
            <person name="Enju A."/>
            <person name="Goldsmith A.D."/>
            <person name="Gurjal M."/>
            <person name="Hansen N.F."/>
            <person name="Hayashizaki Y."/>
            <person name="Johnson-Hopson C."/>
            <person name="Hsuan V.W."/>
            <person name="Iida K."/>
            <person name="Karnes M."/>
            <person name="Khan S."/>
            <person name="Koesema E."/>
            <person name="Ishida J."/>
            <person name="Jiang P.X."/>
            <person name="Jones T."/>
            <person name="Kawai J."/>
            <person name="Kamiya A."/>
            <person name="Meyers C."/>
            <person name="Nakajima M."/>
            <person name="Narusaka M."/>
            <person name="Seki M."/>
            <person name="Sakurai T."/>
            <person name="Satou M."/>
            <person name="Tamse R."/>
            <person name="Vaysberg M."/>
            <person name="Wallender E.K."/>
            <person name="Wong C."/>
            <person name="Yamamura Y."/>
            <person name="Yuan S."/>
            <person name="Shinozaki K."/>
            <person name="Davis R.W."/>
            <person name="Theologis A."/>
            <person name="Ecker J.R."/>
        </authorList>
    </citation>
    <scope>NUCLEOTIDE SEQUENCE [LARGE SCALE MRNA]</scope>
    <source>
        <strain>cv. Columbia</strain>
    </source>
</reference>
<reference key="5">
    <citation type="submission" date="2006-07" db="EMBL/GenBank/DDBJ databases">
        <title>Large-scale analysis of RIKEN Arabidopsis full-length (RAFL) cDNAs.</title>
        <authorList>
            <person name="Totoki Y."/>
            <person name="Seki M."/>
            <person name="Ishida J."/>
            <person name="Nakajima M."/>
            <person name="Enju A."/>
            <person name="Kamiya A."/>
            <person name="Narusaka M."/>
            <person name="Shin-i T."/>
            <person name="Nakagawa M."/>
            <person name="Sakamoto N."/>
            <person name="Oishi K."/>
            <person name="Kohara Y."/>
            <person name="Kobayashi M."/>
            <person name="Toyoda A."/>
            <person name="Sakaki Y."/>
            <person name="Sakurai T."/>
            <person name="Iida K."/>
            <person name="Akiyama K."/>
            <person name="Satou M."/>
            <person name="Toyoda T."/>
            <person name="Konagaya A."/>
            <person name="Carninci P."/>
            <person name="Kawai J."/>
            <person name="Hayashizaki Y."/>
            <person name="Shinozaki K."/>
        </authorList>
    </citation>
    <scope>NUCLEOTIDE SEQUENCE [LARGE SCALE MRNA]</scope>
    <source>
        <strain>cv. Columbia</strain>
    </source>
</reference>
<reference key="6">
    <citation type="submission" date="2002-03" db="EMBL/GenBank/DDBJ databases">
        <title>Full-length cDNA from Arabidopsis thaliana.</title>
        <authorList>
            <person name="Brover V.V."/>
            <person name="Troukhan M.E."/>
            <person name="Alexandrov N.A."/>
            <person name="Lu Y.-P."/>
            <person name="Flavell R.B."/>
            <person name="Feldmann K.A."/>
        </authorList>
    </citation>
    <scope>NUCLEOTIDE SEQUENCE [LARGE SCALE MRNA]</scope>
</reference>
<reference key="7">
    <citation type="journal article" date="2006" name="Plant Mol. Biol.">
        <title>The MYB transcription factor superfamily of Arabidopsis: expression analysis and phylogenetic comparison with the rice MYB family.</title>
        <authorList>
            <person name="Chen Y."/>
            <person name="Yang X."/>
            <person name="He K."/>
            <person name="Liu M."/>
            <person name="Li J."/>
            <person name="Gao Z."/>
            <person name="Lin Z."/>
            <person name="Zhang Y."/>
            <person name="Wang X."/>
            <person name="Qiu X."/>
            <person name="Shen Y."/>
            <person name="Zhang L."/>
            <person name="Deng X."/>
            <person name="Luo J."/>
            <person name="Deng X.-W."/>
            <person name="Chen Z."/>
            <person name="Gu H."/>
            <person name="Qu L.-J."/>
        </authorList>
    </citation>
    <scope>INDUCTION BY CDCL2</scope>
    <scope>GENE FAMILY</scope>
</reference>
<reference key="8">
    <citation type="journal article" date="2009" name="Plant Cell Physiol.">
        <title>A novel group of transcriptional repressors in Arabidopsis.</title>
        <authorList>
            <person name="Ikeda M."/>
            <person name="Ohme-Takagi M."/>
        </authorList>
    </citation>
    <scope>TRANSCRIPTION REPRESSION MOTIF</scope>
</reference>
<reference key="9">
    <citation type="journal article" date="2013" name="J. Exp. Bot.">
        <title>A novel Arabidopsis MYB-like transcription factor, MYBH, regulates hypocotyl elongation by enhancing auxin accumulation.</title>
        <authorList>
            <person name="Kwon Y."/>
            <person name="Kim J.H."/>
            <person name="Nguyen H.N."/>
            <person name="Jikumaru Y."/>
            <person name="Kamiya Y."/>
            <person name="Hong S.-W."/>
            <person name="Lee H."/>
        </authorList>
    </citation>
    <scope>FUNCTION</scope>
    <scope>DISRUPTION PHENOTYPE</scope>
    <scope>INDUCTION BY DARK</scope>
    <scope>SUBCELLULAR LOCATION</scope>
    <source>
        <strain>cv. Columbia</strain>
    </source>
</reference>
<reference key="10">
    <citation type="journal article" date="2014" name="Nat. Commun.">
        <title>Transcriptional control of ROS homeostasis by KUODA1 regulates cell expansion during leaf development.</title>
        <authorList>
            <person name="Lu D."/>
            <person name="Wang T."/>
            <person name="Persson S."/>
            <person name="Mueller-Roeber B."/>
            <person name="Schippers J.H.M."/>
        </authorList>
    </citation>
    <scope>FUNCTION</scope>
    <scope>DISRUPTION PHENOTYPE</scope>
    <scope>DEVELOPMENTAL STAGE</scope>
    <scope>INDUCTION DURING LEAF EXPANSION</scope>
    <scope>SUBCELLULAR LOCATION</scope>
    <source>
        <strain>cv. Columbia</strain>
        <strain>cv. Landsberg erecta</strain>
    </source>
</reference>
<reference key="11">
    <citation type="journal article" date="2015" name="Plant Mol. Biol.">
        <title>A single-repeat MYB transcription repressor, MYBH, participates in regulation of leaf senescence in Arabidopsis.</title>
        <authorList>
            <person name="Huang C.-K."/>
            <person name="Lo P.-C."/>
            <person name="Huang L.-F."/>
            <person name="Wu S.-J."/>
            <person name="Yeh C.-H."/>
            <person name="Lu C.-A."/>
        </authorList>
    </citation>
    <scope>FUNCTION</scope>
    <scope>DISRUPTION PHENOTYPE</scope>
    <scope>INDUCTION BY DARK AND DURING SENESCENCE</scope>
    <scope>TISSUE SPECIFICITY</scope>
    <scope>DEVELOPMENTAL STAGE</scope>
    <source>
        <strain>cv. Columbia</strain>
    </source>
</reference>
<organism>
    <name type="scientific">Arabidopsis thaliana</name>
    <name type="common">Mouse-ear cress</name>
    <dbReference type="NCBI Taxonomy" id="3702"/>
    <lineage>
        <taxon>Eukaryota</taxon>
        <taxon>Viridiplantae</taxon>
        <taxon>Streptophyta</taxon>
        <taxon>Embryophyta</taxon>
        <taxon>Tracheophyta</taxon>
        <taxon>Spermatophyta</taxon>
        <taxon>Magnoliopsida</taxon>
        <taxon>eudicotyledons</taxon>
        <taxon>Gunneridae</taxon>
        <taxon>Pentapetalae</taxon>
        <taxon>rosids</taxon>
        <taxon>malvids</taxon>
        <taxon>Brassicales</taxon>
        <taxon>Brassicaceae</taxon>
        <taxon>Camelineae</taxon>
        <taxon>Arabidopsis</taxon>
    </lineage>
</organism>
<gene>
    <name evidence="10" type="primary">KUA1</name>
    <name evidence="9" type="synonym">MYBH</name>
    <name evidence="13" type="ordered locus">At5g47390</name>
    <name evidence="14" type="ORF">MQL5.25</name>
</gene>
<keyword id="KW-0238">DNA-binding</keyword>
<keyword id="KW-0479">Metal-binding</keyword>
<keyword id="KW-0539">Nucleus</keyword>
<keyword id="KW-1185">Reference proteome</keyword>
<keyword id="KW-0678">Repressor</keyword>
<keyword id="KW-0804">Transcription</keyword>
<keyword id="KW-0805">Transcription regulation</keyword>
<keyword id="KW-0862">Zinc</keyword>
<keyword id="KW-0863">Zinc-finger</keyword>
<name>KUA1_ARATH</name>
<evidence type="ECO:0000255" key="1">
    <source>
        <dbReference type="PROSITE-ProRule" id="PRU00047"/>
    </source>
</evidence>
<evidence type="ECO:0000255" key="2">
    <source>
        <dbReference type="PROSITE-ProRule" id="PRU00625"/>
    </source>
</evidence>
<evidence type="ECO:0000256" key="3">
    <source>
        <dbReference type="SAM" id="MobiDB-lite"/>
    </source>
</evidence>
<evidence type="ECO:0000269" key="4">
    <source>
    </source>
</evidence>
<evidence type="ECO:0000269" key="5">
    <source>
    </source>
</evidence>
<evidence type="ECO:0000269" key="6">
    <source>
    </source>
</evidence>
<evidence type="ECO:0000269" key="7">
    <source>
    </source>
</evidence>
<evidence type="ECO:0000303" key="8">
    <source>
    </source>
</evidence>
<evidence type="ECO:0000303" key="9">
    <source>
    </source>
</evidence>
<evidence type="ECO:0000303" key="10">
    <source>
    </source>
</evidence>
<evidence type="ECO:0000303" key="11">
    <source>
    </source>
</evidence>
<evidence type="ECO:0000305" key="12">
    <source>
    </source>
</evidence>
<evidence type="ECO:0000312" key="13">
    <source>
        <dbReference type="Araport" id="AT5G47390"/>
    </source>
</evidence>
<evidence type="ECO:0000312" key="14">
    <source>
        <dbReference type="EMBL" id="BAA97173.1"/>
    </source>
</evidence>
<sequence>MTRRCSHCNHNGHNSRTCPNRGVKLFGVRLTEGSIRKSASMGNLSHYTGSGSGGHGTGSNTPGSPGDVPDHVAGDGYASEDFVAGSSSSRERKKGTPWTEEEHRMFLLGLQKLGKGDWRGISRNYVTTRTPTQVASHAQKYFIRQSNVSRRKRRSSLFDMVPDEVGDIPMDLQEPEEDNIPVETEMQGADSIHQTLAPSSLHAPSILEIEECESMDSTNSTTGEPTATAAAASSSSRLEETTQLQSQLQPQPQLPGSFPILYPTYFSPYYPFPFPIWPAGYVPEPPKKEETHEILRPTAVHSKAPINVDELLGMSKLSLAESNKHGESDQSLSLKLGGGSSSRQSAFHPNPSSDSSDIKSVIHAL</sequence>
<protein>
    <recommendedName>
        <fullName evidence="10">Transcription factor KUA1</fullName>
    </recommendedName>
    <alternativeName>
        <fullName evidence="9">Myb-related protein H</fullName>
        <shortName evidence="9">AtMYBH</shortName>
        <shortName evidence="11">AtMYBS3</shortName>
        <shortName evidence="11">MYBS3-homolog protein</shortName>
    </alternativeName>
    <alternativeName>
        <fullName evidence="10">Protein KUODA1</fullName>
    </alternativeName>
</protein>